<sequence length="128" mass="13728">MAYSKKVMDHYENPRNVGSFSNSDSNVGSGLVGAPACGDVMKLQIKVNEQGIIEDACFKTYGCGSAIASSSLVTEWIKGKSITEAEAIKNTSIVEELELPPVKIHCSILAEDAIKAAISDYKSKKNKN</sequence>
<reference key="1">
    <citation type="journal article" date="1998" name="Curr. Microbiol.">
        <title>Sequence analysis of a 34.7-kb DNA segment from the genome of Buchnera aphidicola (endosymbiont of aphids) containing groEL, dnaA, the atp operon, gidA, and rho.</title>
        <authorList>
            <person name="Clark M.A."/>
            <person name="Baumann L."/>
            <person name="Baumann P."/>
        </authorList>
    </citation>
    <scope>NUCLEOTIDE SEQUENCE [GENOMIC DNA]</scope>
</reference>
<reference key="2">
    <citation type="journal article" date="2002" name="Science">
        <title>50 million years of genomic stasis in endosymbiotic bacteria.</title>
        <authorList>
            <person name="Tamas I."/>
            <person name="Klasson L."/>
            <person name="Canbaeck B."/>
            <person name="Naeslund A.K."/>
            <person name="Eriksson A.-S."/>
            <person name="Wernegreen J.J."/>
            <person name="Sandstroem J.P."/>
            <person name="Moran N.A."/>
            <person name="Andersson S.G.E."/>
        </authorList>
    </citation>
    <scope>NUCLEOTIDE SEQUENCE [LARGE SCALE GENOMIC DNA]</scope>
    <source>
        <strain>Sg</strain>
    </source>
</reference>
<name>ISCU_BUCAP</name>
<feature type="chain" id="PRO_0000166182" description="Iron-sulfur cluster assembly scaffold protein IscU">
    <location>
        <begin position="1"/>
        <end position="128"/>
    </location>
</feature>
<proteinExistence type="inferred from homology"/>
<comment type="function">
    <text evidence="1">A scaffold on which IscS assembles Fe-S clusters. Subsequently gives the nascent cluster to other proteins. It is likely that Fe-S cluster coordination is flexible as the role of this complex is to build and then hand off Fe-S clusters (By similarity).</text>
</comment>
<comment type="subunit">
    <text evidence="1">Forms a heterotetramer with IscS; each subunit of the IscS dimer contacts an IscU monomer.</text>
</comment>
<comment type="similarity">
    <text evidence="2">Belongs to the NifU family.</text>
</comment>
<protein>
    <recommendedName>
        <fullName>Iron-sulfur cluster assembly scaffold protein IscU</fullName>
    </recommendedName>
    <alternativeName>
        <fullName>Sulfur acceptor protein IscU</fullName>
    </alternativeName>
</protein>
<dbReference type="EMBL" id="AF008210">
    <property type="protein sequence ID" value="AAC38123.1"/>
    <property type="molecule type" value="Genomic_DNA"/>
</dbReference>
<dbReference type="EMBL" id="AE013218">
    <property type="protein sequence ID" value="AAM68112.1"/>
    <property type="molecule type" value="Genomic_DNA"/>
</dbReference>
<dbReference type="RefSeq" id="WP_011054078.1">
    <property type="nucleotide sequence ID" value="NC_004061.1"/>
</dbReference>
<dbReference type="SMR" id="O51885"/>
<dbReference type="STRING" id="198804.BUsg_578"/>
<dbReference type="GeneID" id="93004060"/>
<dbReference type="KEGG" id="bas:BUsg_578"/>
<dbReference type="eggNOG" id="COG0822">
    <property type="taxonomic scope" value="Bacteria"/>
</dbReference>
<dbReference type="HOGENOM" id="CLU_079283_5_0_6"/>
<dbReference type="Proteomes" id="UP000000416">
    <property type="component" value="Chromosome"/>
</dbReference>
<dbReference type="GO" id="GO:0005737">
    <property type="term" value="C:cytoplasm"/>
    <property type="evidence" value="ECO:0007669"/>
    <property type="project" value="UniProtKB-ARBA"/>
</dbReference>
<dbReference type="GO" id="GO:0005506">
    <property type="term" value="F:iron ion binding"/>
    <property type="evidence" value="ECO:0007669"/>
    <property type="project" value="InterPro"/>
</dbReference>
<dbReference type="GO" id="GO:0051536">
    <property type="term" value="F:iron-sulfur cluster binding"/>
    <property type="evidence" value="ECO:0007669"/>
    <property type="project" value="InterPro"/>
</dbReference>
<dbReference type="GO" id="GO:0016226">
    <property type="term" value="P:iron-sulfur cluster assembly"/>
    <property type="evidence" value="ECO:0007669"/>
    <property type="project" value="InterPro"/>
</dbReference>
<dbReference type="CDD" id="cd06664">
    <property type="entry name" value="IscU_like"/>
    <property type="match status" value="1"/>
</dbReference>
<dbReference type="FunFam" id="3.90.1010.10:FF:000001">
    <property type="entry name" value="Iron-sulfur cluster assembly scaffold protein IscU"/>
    <property type="match status" value="1"/>
</dbReference>
<dbReference type="Gene3D" id="3.90.1010.10">
    <property type="match status" value="1"/>
</dbReference>
<dbReference type="InterPro" id="IPR011339">
    <property type="entry name" value="ISCU"/>
</dbReference>
<dbReference type="InterPro" id="IPR002871">
    <property type="entry name" value="NIF_FeS_clus_asmbl_NifU_N"/>
</dbReference>
<dbReference type="NCBIfam" id="TIGR01999">
    <property type="entry name" value="iscU"/>
    <property type="match status" value="1"/>
</dbReference>
<dbReference type="PANTHER" id="PTHR10093">
    <property type="entry name" value="IRON-SULFUR CLUSTER ASSEMBLY ENZYME NIFU HOMOLOG"/>
    <property type="match status" value="1"/>
</dbReference>
<dbReference type="Pfam" id="PF01592">
    <property type="entry name" value="NifU_N"/>
    <property type="match status" value="1"/>
</dbReference>
<dbReference type="SUPFAM" id="SSF82649">
    <property type="entry name" value="SufE/NifU"/>
    <property type="match status" value="1"/>
</dbReference>
<accession>O51885</accession>
<organism>
    <name type="scientific">Buchnera aphidicola subsp. Schizaphis graminum (strain Sg)</name>
    <dbReference type="NCBI Taxonomy" id="198804"/>
    <lineage>
        <taxon>Bacteria</taxon>
        <taxon>Pseudomonadati</taxon>
        <taxon>Pseudomonadota</taxon>
        <taxon>Gammaproteobacteria</taxon>
        <taxon>Enterobacterales</taxon>
        <taxon>Erwiniaceae</taxon>
        <taxon>Buchnera</taxon>
    </lineage>
</organism>
<evidence type="ECO:0000250" key="1"/>
<evidence type="ECO:0000305" key="2"/>
<gene>
    <name type="primary">iscU</name>
    <name type="synonym">nifU</name>
    <name type="ordered locus">BUsg_578</name>
</gene>